<sequence length="237" mass="26762">MDIKLVYSTSDPVGLTIKKLGYSFEEIDEDVTDFHYKNGEAIVIFSRHESKASIPSLTVHYPGNPSEEVMGGEPKKLGIAYPRLLTSILREIKKIDLDIEKTMEATHHGPTYQNVPVIFVEIGSDKTYWTNERIVRTLVDSTLKGIDKVDETDCRDYISGFGGPHYSKLFTKLADESCIGHVISKHYVDKLDDKVIIQAIANSVNNINKVVIDSLNLKQRERIIAALKSFDIHIQLR</sequence>
<proteinExistence type="inferred from homology"/>
<dbReference type="EC" id="3.1.1.96" evidence="1"/>
<dbReference type="EMBL" id="CP001401">
    <property type="protein sequence ID" value="ACP54081.1"/>
    <property type="molecule type" value="Genomic_DNA"/>
</dbReference>
<dbReference type="RefSeq" id="WP_012710231.1">
    <property type="nucleotide sequence ID" value="NC_012632.1"/>
</dbReference>
<dbReference type="SMR" id="C3N0C0"/>
<dbReference type="KEGG" id="sim:M1627_0052"/>
<dbReference type="HOGENOM" id="CLU_056464_1_0_2"/>
<dbReference type="Proteomes" id="UP000002307">
    <property type="component" value="Chromosome"/>
</dbReference>
<dbReference type="GO" id="GO:0051499">
    <property type="term" value="F:D-aminoacyl-tRNA deacylase activity"/>
    <property type="evidence" value="ECO:0007669"/>
    <property type="project" value="UniProtKB-UniRule"/>
</dbReference>
<dbReference type="GO" id="GO:0008270">
    <property type="term" value="F:zinc ion binding"/>
    <property type="evidence" value="ECO:0007669"/>
    <property type="project" value="UniProtKB-UniRule"/>
</dbReference>
<dbReference type="GO" id="GO:0019478">
    <property type="term" value="P:D-amino acid catabolic process"/>
    <property type="evidence" value="ECO:0007669"/>
    <property type="project" value="UniProtKB-UniRule"/>
</dbReference>
<dbReference type="Gene3D" id="3.40.50.10700">
    <property type="entry name" value="AF0625-like"/>
    <property type="match status" value="1"/>
</dbReference>
<dbReference type="Gene3D" id="3.40.630.50">
    <property type="entry name" value="AF0625-like"/>
    <property type="match status" value="1"/>
</dbReference>
<dbReference type="HAMAP" id="MF_00562">
    <property type="entry name" value="Deacylase_DtdA"/>
    <property type="match status" value="1"/>
</dbReference>
<dbReference type="InterPro" id="IPR018033">
    <property type="entry name" value="Deacylase_DtdA_archaea"/>
</dbReference>
<dbReference type="InterPro" id="IPR007508">
    <property type="entry name" value="DtdA"/>
</dbReference>
<dbReference type="NCBIfam" id="NF003070">
    <property type="entry name" value="PRK03995.1-1"/>
    <property type="match status" value="1"/>
</dbReference>
<dbReference type="PANTHER" id="PTHR34667">
    <property type="entry name" value="D-AMINOACYL-TRNA DEACYLASE"/>
    <property type="match status" value="1"/>
</dbReference>
<dbReference type="PANTHER" id="PTHR34667:SF1">
    <property type="entry name" value="D-AMINOACYL-TRNA DEACYLASE"/>
    <property type="match status" value="1"/>
</dbReference>
<dbReference type="Pfam" id="PF04414">
    <property type="entry name" value="tRNA_deacylase"/>
    <property type="match status" value="1"/>
</dbReference>
<dbReference type="PIRSF" id="PIRSF016210">
    <property type="entry name" value="UCP016210"/>
    <property type="match status" value="1"/>
</dbReference>
<dbReference type="SUPFAM" id="SSF142535">
    <property type="entry name" value="AF0625-like"/>
    <property type="match status" value="1"/>
</dbReference>
<comment type="function">
    <text evidence="1">D-aminoacyl-tRNA deacylase with broad substrate specificity. By recycling D-aminoacyl-tRNA to D-amino acids and free tRNA molecules, this enzyme counteracts the toxicity associated with the formation of D-aminoacyl-tRNA entities in vivo.</text>
</comment>
<comment type="catalytic activity">
    <reaction evidence="1">
        <text>a D-aminoacyl-tRNA + H2O = a tRNA + a D-alpha-amino acid + H(+)</text>
        <dbReference type="Rhea" id="RHEA:13953"/>
        <dbReference type="Rhea" id="RHEA-COMP:10123"/>
        <dbReference type="Rhea" id="RHEA-COMP:10124"/>
        <dbReference type="ChEBI" id="CHEBI:15377"/>
        <dbReference type="ChEBI" id="CHEBI:15378"/>
        <dbReference type="ChEBI" id="CHEBI:59871"/>
        <dbReference type="ChEBI" id="CHEBI:78442"/>
        <dbReference type="ChEBI" id="CHEBI:79333"/>
        <dbReference type="EC" id="3.1.1.96"/>
    </reaction>
</comment>
<comment type="catalytic activity">
    <reaction evidence="1">
        <text>glycyl-tRNA(Ala) + H2O = tRNA(Ala) + glycine + H(+)</text>
        <dbReference type="Rhea" id="RHEA:53744"/>
        <dbReference type="Rhea" id="RHEA-COMP:9657"/>
        <dbReference type="Rhea" id="RHEA-COMP:13640"/>
        <dbReference type="ChEBI" id="CHEBI:15377"/>
        <dbReference type="ChEBI" id="CHEBI:15378"/>
        <dbReference type="ChEBI" id="CHEBI:57305"/>
        <dbReference type="ChEBI" id="CHEBI:78442"/>
        <dbReference type="ChEBI" id="CHEBI:78522"/>
        <dbReference type="EC" id="3.1.1.96"/>
    </reaction>
</comment>
<comment type="cofactor">
    <cofactor evidence="1">
        <name>Zn(2+)</name>
        <dbReference type="ChEBI" id="CHEBI:29105"/>
    </cofactor>
    <text evidence="1">Binds 2 Zn(2+) ions per subunit.</text>
</comment>
<comment type="subunit">
    <text evidence="1">Monomer.</text>
</comment>
<comment type="similarity">
    <text evidence="1">Belongs to the DtdA deacylase family.</text>
</comment>
<organism>
    <name type="scientific">Saccharolobus islandicus (strain M.16.27)</name>
    <name type="common">Sulfolobus islandicus</name>
    <dbReference type="NCBI Taxonomy" id="427318"/>
    <lineage>
        <taxon>Archaea</taxon>
        <taxon>Thermoproteota</taxon>
        <taxon>Thermoprotei</taxon>
        <taxon>Sulfolobales</taxon>
        <taxon>Sulfolobaceae</taxon>
        <taxon>Saccharolobus</taxon>
    </lineage>
</organism>
<protein>
    <recommendedName>
        <fullName evidence="1">D-aminoacyl-tRNA deacylase</fullName>
        <ecNumber evidence="1">3.1.1.96</ecNumber>
    </recommendedName>
    <alternativeName>
        <fullName>D-tyrosyl-tRNA(Tyr) deacylase</fullName>
    </alternativeName>
</protein>
<evidence type="ECO:0000255" key="1">
    <source>
        <dbReference type="HAMAP-Rule" id="MF_00562"/>
    </source>
</evidence>
<gene>
    <name evidence="1" type="primary">dtdA</name>
    <name type="ordered locus">M1627_0052</name>
</gene>
<accession>C3N0C0</accession>
<feature type="chain" id="PRO_1000212044" description="D-aminoacyl-tRNA deacylase">
    <location>
        <begin position="1"/>
        <end position="237"/>
    </location>
</feature>
<keyword id="KW-0378">Hydrolase</keyword>
<keyword id="KW-0479">Metal-binding</keyword>
<keyword id="KW-0862">Zinc</keyword>
<reference key="1">
    <citation type="journal article" date="2009" name="Proc. Natl. Acad. Sci. U.S.A.">
        <title>Biogeography of the Sulfolobus islandicus pan-genome.</title>
        <authorList>
            <person name="Reno M.L."/>
            <person name="Held N.L."/>
            <person name="Fields C.J."/>
            <person name="Burke P.V."/>
            <person name="Whitaker R.J."/>
        </authorList>
    </citation>
    <scope>NUCLEOTIDE SEQUENCE [LARGE SCALE GENOMIC DNA]</scope>
    <source>
        <strain>M.16.27</strain>
    </source>
</reference>
<name>DTDA_SACI3</name>